<accession>Q03607</accession>
<proteinExistence type="predicted"/>
<organism>
    <name type="scientific">Caenorhabditis elegans</name>
    <dbReference type="NCBI Taxonomy" id="6239"/>
    <lineage>
        <taxon>Eukaryota</taxon>
        <taxon>Metazoa</taxon>
        <taxon>Ecdysozoa</taxon>
        <taxon>Nematoda</taxon>
        <taxon>Chromadorea</taxon>
        <taxon>Rhabditida</taxon>
        <taxon>Rhabditina</taxon>
        <taxon>Rhabditomorpha</taxon>
        <taxon>Rhabditoidea</taxon>
        <taxon>Rhabditidae</taxon>
        <taxon>Peloderinae</taxon>
        <taxon>Caenorhabditis</taxon>
    </lineage>
</organism>
<sequence>MPPPPLISLDVEGVYFKTRIATLKSIEGTYFTKLFETNWREQLDRDGRLFIDRDSSVFPVILNFLRDHEKCSLPKDEYQLMRILREAVFFKIGPLRNMIEHKLRTFCTCPPELPSTPIPNQILTQKENVPIVPRNLLLSKPPPPPPPPLPSLMQPKDTVQIPMRKPPTGRNSKKIKTSADSISLPRNFTHIAHVGWNGASVLFDKKMTDDPTVRKICDAAAEAVDLSAVYNVVNKNADEESHSVEVLITGGLMQSRDGTSRH</sequence>
<keyword id="KW-1185">Reference proteome</keyword>
<protein>
    <recommendedName>
        <fullName>Uncharacterized protein T23G5.3</fullName>
    </recommendedName>
</protein>
<feature type="chain" id="PRO_0000065477" description="Uncharacterized protein T23G5.3">
    <location>
        <begin position="1"/>
        <end position="262"/>
    </location>
</feature>
<feature type="domain" description="BTB">
    <location>
        <begin position="5"/>
        <end position="107"/>
    </location>
</feature>
<feature type="domain" description="CRIB" evidence="1">
    <location>
        <begin position="182"/>
        <end position="195"/>
    </location>
</feature>
<gene>
    <name type="ORF">T23G5.3</name>
</gene>
<dbReference type="EMBL" id="Z19158">
    <property type="protein sequence ID" value="CAA79571.3"/>
    <property type="molecule type" value="Genomic_DNA"/>
</dbReference>
<dbReference type="PIR" id="S28304">
    <property type="entry name" value="S28304"/>
</dbReference>
<dbReference type="RefSeq" id="NP_499040.2">
    <property type="nucleotide sequence ID" value="NM_066639.4"/>
</dbReference>
<dbReference type="SMR" id="Q03607"/>
<dbReference type="BioGRID" id="53470">
    <property type="interactions" value="2"/>
</dbReference>
<dbReference type="FunCoup" id="Q03607">
    <property type="interactions" value="103"/>
</dbReference>
<dbReference type="IntAct" id="Q03607">
    <property type="interactions" value="1"/>
</dbReference>
<dbReference type="STRING" id="6239.T23G5.3.1"/>
<dbReference type="PaxDb" id="6239-T23G5.3"/>
<dbReference type="EnsemblMetazoa" id="T23G5.3.1">
    <property type="protein sequence ID" value="T23G5.3.1"/>
    <property type="gene ID" value="WBGene00011963"/>
</dbReference>
<dbReference type="GeneID" id="188816"/>
<dbReference type="KEGG" id="cel:CELE_T23G5.3"/>
<dbReference type="UCSC" id="T23G5.3">
    <property type="organism name" value="c. elegans"/>
</dbReference>
<dbReference type="AGR" id="WB:WBGene00011963"/>
<dbReference type="CTD" id="188816"/>
<dbReference type="WormBase" id="T23G5.3">
    <property type="protein sequence ID" value="CE37793"/>
    <property type="gene ID" value="WBGene00011963"/>
</dbReference>
<dbReference type="eggNOG" id="KOG2723">
    <property type="taxonomic scope" value="Eukaryota"/>
</dbReference>
<dbReference type="HOGENOM" id="CLU_1066474_0_0_1"/>
<dbReference type="InParanoid" id="Q03607"/>
<dbReference type="OMA" id="DEYQLMR"/>
<dbReference type="OrthoDB" id="2414723at2759"/>
<dbReference type="PhylomeDB" id="Q03607"/>
<dbReference type="Reactome" id="R-CEL-8951664">
    <property type="pathway name" value="Neddylation"/>
</dbReference>
<dbReference type="Reactome" id="R-CEL-983168">
    <property type="pathway name" value="Antigen processing: Ubiquitination &amp; Proteasome degradation"/>
</dbReference>
<dbReference type="PRO" id="PR:Q03607"/>
<dbReference type="Proteomes" id="UP000001940">
    <property type="component" value="Chromosome III"/>
</dbReference>
<dbReference type="Bgee" id="WBGene00011963">
    <property type="expression patterns" value="Expressed in embryo and 3 other cell types or tissues"/>
</dbReference>
<dbReference type="GO" id="GO:0051260">
    <property type="term" value="P:protein homooligomerization"/>
    <property type="evidence" value="ECO:0007669"/>
    <property type="project" value="InterPro"/>
</dbReference>
<dbReference type="CDD" id="cd18316">
    <property type="entry name" value="BTB_POZ_KCTD-like"/>
    <property type="match status" value="1"/>
</dbReference>
<dbReference type="CDD" id="cd00132">
    <property type="entry name" value="CRIB"/>
    <property type="match status" value="1"/>
</dbReference>
<dbReference type="Gene3D" id="3.90.810.10">
    <property type="entry name" value="CRIB domain"/>
    <property type="match status" value="1"/>
</dbReference>
<dbReference type="Gene3D" id="3.30.710.10">
    <property type="entry name" value="Potassium Channel Kv1.1, Chain A"/>
    <property type="match status" value="1"/>
</dbReference>
<dbReference type="InterPro" id="IPR045068">
    <property type="entry name" value="BACURD1-3"/>
</dbReference>
<dbReference type="InterPro" id="IPR000210">
    <property type="entry name" value="BTB/POZ_dom"/>
</dbReference>
<dbReference type="InterPro" id="IPR000095">
    <property type="entry name" value="CRIB_dom"/>
</dbReference>
<dbReference type="InterPro" id="IPR036936">
    <property type="entry name" value="CRIB_dom_sf"/>
</dbReference>
<dbReference type="InterPro" id="IPR011333">
    <property type="entry name" value="SKP1/BTB/POZ_sf"/>
</dbReference>
<dbReference type="InterPro" id="IPR003131">
    <property type="entry name" value="T1-type_BTB"/>
</dbReference>
<dbReference type="PANTHER" id="PTHR11145">
    <property type="entry name" value="BTB/POZ DOMAIN-CONTAINING ADAPTER FOR CUL3-MEDIATED RHOA DEGRADATION PROTEIN FAMILY MEMBER"/>
    <property type="match status" value="1"/>
</dbReference>
<dbReference type="PANTHER" id="PTHR11145:SF8">
    <property type="entry name" value="RE57120P"/>
    <property type="match status" value="1"/>
</dbReference>
<dbReference type="Pfam" id="PF02214">
    <property type="entry name" value="BTB_2"/>
    <property type="match status" value="1"/>
</dbReference>
<dbReference type="Pfam" id="PF00786">
    <property type="entry name" value="PBD"/>
    <property type="match status" value="1"/>
</dbReference>
<dbReference type="SMART" id="SM00225">
    <property type="entry name" value="BTB"/>
    <property type="match status" value="1"/>
</dbReference>
<dbReference type="SMART" id="SM00285">
    <property type="entry name" value="PBD"/>
    <property type="match status" value="1"/>
</dbReference>
<dbReference type="SUPFAM" id="SSF54695">
    <property type="entry name" value="POZ domain"/>
    <property type="match status" value="1"/>
</dbReference>
<dbReference type="PROSITE" id="PS50108">
    <property type="entry name" value="CRIB"/>
    <property type="match status" value="1"/>
</dbReference>
<evidence type="ECO:0000255" key="1">
    <source>
        <dbReference type="PROSITE-ProRule" id="PRU00057"/>
    </source>
</evidence>
<name>YN03_CAEEL</name>
<reference key="1">
    <citation type="journal article" date="1994" name="Nature">
        <title>2.2 Mb of contiguous nucleotide sequence from chromosome III of C. elegans.</title>
        <authorList>
            <person name="Wilson R."/>
            <person name="Ainscough R."/>
            <person name="Anderson K."/>
            <person name="Baynes C."/>
            <person name="Berks M."/>
            <person name="Bonfield J."/>
            <person name="Burton J."/>
            <person name="Connell M."/>
            <person name="Copsey T."/>
            <person name="Cooper J."/>
            <person name="Coulson A."/>
            <person name="Craxton M."/>
            <person name="Dear S."/>
            <person name="Du Z."/>
            <person name="Durbin R."/>
            <person name="Favello A."/>
            <person name="Fraser A."/>
            <person name="Fulton L."/>
            <person name="Gardner A."/>
            <person name="Green P."/>
            <person name="Hawkins T."/>
            <person name="Hillier L."/>
            <person name="Jier M."/>
            <person name="Johnston L."/>
            <person name="Jones M."/>
            <person name="Kershaw J."/>
            <person name="Kirsten J."/>
            <person name="Laisster N."/>
            <person name="Latreille P."/>
            <person name="Lightning J."/>
            <person name="Lloyd C."/>
            <person name="Mortimore B."/>
            <person name="O'Callaghan M."/>
            <person name="Parsons J."/>
            <person name="Percy C."/>
            <person name="Rifken L."/>
            <person name="Roopra A."/>
            <person name="Saunders D."/>
            <person name="Shownkeen R."/>
            <person name="Sims M."/>
            <person name="Smaldon N."/>
            <person name="Smith A."/>
            <person name="Smith M."/>
            <person name="Sonnhammer E."/>
            <person name="Staden R."/>
            <person name="Sulston J."/>
            <person name="Thierry-Mieg J."/>
            <person name="Thomas K."/>
            <person name="Vaudin M."/>
            <person name="Vaughan K."/>
            <person name="Waterston R."/>
            <person name="Watson A."/>
            <person name="Weinstock L."/>
            <person name="Wilkinson-Sproat J."/>
            <person name="Wohldman P."/>
        </authorList>
    </citation>
    <scope>NUCLEOTIDE SEQUENCE [LARGE SCALE GENOMIC DNA]</scope>
    <source>
        <strain>Bristol N2</strain>
    </source>
</reference>
<reference key="2">
    <citation type="journal article" date="1998" name="Science">
        <title>Genome sequence of the nematode C. elegans: a platform for investigating biology.</title>
        <authorList>
            <consortium name="The C. elegans sequencing consortium"/>
        </authorList>
    </citation>
    <scope>NUCLEOTIDE SEQUENCE [LARGE SCALE GENOMIC DNA]</scope>
    <source>
        <strain>Bristol N2</strain>
    </source>
</reference>